<evidence type="ECO:0000255" key="1">
    <source>
        <dbReference type="HAMAP-Rule" id="MF_00808"/>
    </source>
</evidence>
<geneLocation type="chloroplast"/>
<sequence>MEALVYTFLLVSTLGIIFFAIFFREPPKVPTKKMK</sequence>
<name>PSBT_PHYAM</name>
<gene>
    <name evidence="1" type="primary">psbT</name>
</gene>
<comment type="function">
    <text evidence="1">Found at the monomer-monomer interface of the photosystem II (PS II) dimer, plays a role in assembly and dimerization of PSII. PSII is a light-driven water plastoquinone oxidoreductase, using light energy to abstract electrons from H(2)O, generating a proton gradient subsequently used for ATP formation.</text>
</comment>
<comment type="subunit">
    <text evidence="1">PSII is composed of 1 copy each of membrane proteins PsbA, PsbB, PsbC, PsbD, PsbE, PsbF, PsbH, PsbI, PsbJ, PsbK, PsbL, PsbM, PsbT, PsbY, PsbZ, Psb30/Ycf12, at least 3 peripheral proteins of the oxygen-evolving complex and a large number of cofactors. It forms dimeric complexes.</text>
</comment>
<comment type="subcellular location">
    <subcellularLocation>
        <location evidence="1">Plastid</location>
        <location evidence="1">Chloroplast thylakoid membrane</location>
        <topology evidence="1">Single-pass membrane protein</topology>
    </subcellularLocation>
</comment>
<comment type="similarity">
    <text evidence="1">Belongs to the PsbT family.</text>
</comment>
<accession>Q6EYG4</accession>
<feature type="chain" id="PRO_0000217967" description="Photosystem II reaction center protein T">
    <location>
        <begin position="1"/>
        <end position="35"/>
    </location>
</feature>
<feature type="transmembrane region" description="Helical" evidence="1">
    <location>
        <begin position="3"/>
        <end position="23"/>
    </location>
</feature>
<reference key="1">
    <citation type="submission" date="2002-07" db="EMBL/GenBank/DDBJ databases">
        <title>Parsing out signal and noise for seed-plant phylogenetic inference.</title>
        <authorList>
            <person name="Graham S.W."/>
            <person name="Rai H.S."/>
            <person name="Ikegami K."/>
            <person name="Reeves P.A."/>
            <person name="Olmstead R.G."/>
        </authorList>
    </citation>
    <scope>NUCLEOTIDE SEQUENCE [GENOMIC DNA]</scope>
</reference>
<dbReference type="EMBL" id="AF528906">
    <property type="protein sequence ID" value="AAQ09409.1"/>
    <property type="molecule type" value="Genomic_DNA"/>
</dbReference>
<dbReference type="RefSeq" id="YP_010533523.1">
    <property type="nucleotide sequence ID" value="NC_067846.1"/>
</dbReference>
<dbReference type="SMR" id="Q6EYG4"/>
<dbReference type="GeneID" id="76340653"/>
<dbReference type="GO" id="GO:0009535">
    <property type="term" value="C:chloroplast thylakoid membrane"/>
    <property type="evidence" value="ECO:0007669"/>
    <property type="project" value="UniProtKB-SubCell"/>
</dbReference>
<dbReference type="GO" id="GO:0009539">
    <property type="term" value="C:photosystem II reaction center"/>
    <property type="evidence" value="ECO:0007669"/>
    <property type="project" value="InterPro"/>
</dbReference>
<dbReference type="GO" id="GO:0015979">
    <property type="term" value="P:photosynthesis"/>
    <property type="evidence" value="ECO:0007669"/>
    <property type="project" value="UniProtKB-UniRule"/>
</dbReference>
<dbReference type="HAMAP" id="MF_00808">
    <property type="entry name" value="PSII_PsbT"/>
    <property type="match status" value="1"/>
</dbReference>
<dbReference type="InterPro" id="IPR001743">
    <property type="entry name" value="PSII_PsbT"/>
</dbReference>
<dbReference type="InterPro" id="IPR037268">
    <property type="entry name" value="PSII_PsbT_sf"/>
</dbReference>
<dbReference type="PANTHER" id="PTHR36411">
    <property type="match status" value="1"/>
</dbReference>
<dbReference type="PANTHER" id="PTHR36411:SF2">
    <property type="entry name" value="PHOTOSYSTEM II REACTION CENTER PROTEIN T"/>
    <property type="match status" value="1"/>
</dbReference>
<dbReference type="Pfam" id="PF01405">
    <property type="entry name" value="PsbT"/>
    <property type="match status" value="1"/>
</dbReference>
<dbReference type="SUPFAM" id="SSF161029">
    <property type="entry name" value="Photosystem II reaction center protein T, PsbT"/>
    <property type="match status" value="1"/>
</dbReference>
<protein>
    <recommendedName>
        <fullName evidence="1">Photosystem II reaction center protein T</fullName>
        <shortName evidence="1">PSII-T</shortName>
    </recommendedName>
</protein>
<proteinExistence type="inferred from homology"/>
<keyword id="KW-0150">Chloroplast</keyword>
<keyword id="KW-0472">Membrane</keyword>
<keyword id="KW-0602">Photosynthesis</keyword>
<keyword id="KW-0604">Photosystem II</keyword>
<keyword id="KW-0934">Plastid</keyword>
<keyword id="KW-0793">Thylakoid</keyword>
<keyword id="KW-0812">Transmembrane</keyword>
<keyword id="KW-1133">Transmembrane helix</keyword>
<organism>
    <name type="scientific">Phytolacca americana</name>
    <name type="common">American pokeweed</name>
    <name type="synonym">Phytolacca decandra</name>
    <dbReference type="NCBI Taxonomy" id="3527"/>
    <lineage>
        <taxon>Eukaryota</taxon>
        <taxon>Viridiplantae</taxon>
        <taxon>Streptophyta</taxon>
        <taxon>Embryophyta</taxon>
        <taxon>Tracheophyta</taxon>
        <taxon>Spermatophyta</taxon>
        <taxon>Magnoliopsida</taxon>
        <taxon>eudicotyledons</taxon>
        <taxon>Gunneridae</taxon>
        <taxon>Pentapetalae</taxon>
        <taxon>Caryophyllales</taxon>
        <taxon>Phytolaccaceae</taxon>
        <taxon>Phytolacca</taxon>
    </lineage>
</organism>